<feature type="chain" id="PRO_1000022523" description="Chorismate synthase">
    <location>
        <begin position="1"/>
        <end position="362"/>
    </location>
</feature>
<feature type="binding site" evidence="1">
    <location>
        <position position="47"/>
    </location>
    <ligand>
        <name>NADP(+)</name>
        <dbReference type="ChEBI" id="CHEBI:58349"/>
    </ligand>
</feature>
<feature type="binding site" evidence="1">
    <location>
        <begin position="124"/>
        <end position="126"/>
    </location>
    <ligand>
        <name>FMN</name>
        <dbReference type="ChEBI" id="CHEBI:58210"/>
    </ligand>
</feature>
<feature type="binding site" evidence="1">
    <location>
        <position position="286"/>
    </location>
    <ligand>
        <name>FMN</name>
        <dbReference type="ChEBI" id="CHEBI:58210"/>
    </ligand>
</feature>
<feature type="binding site" evidence="1">
    <location>
        <begin position="301"/>
        <end position="305"/>
    </location>
    <ligand>
        <name>FMN</name>
        <dbReference type="ChEBI" id="CHEBI:58210"/>
    </ligand>
</feature>
<feature type="binding site" evidence="1">
    <location>
        <position position="327"/>
    </location>
    <ligand>
        <name>FMN</name>
        <dbReference type="ChEBI" id="CHEBI:58210"/>
    </ligand>
</feature>
<sequence length="362" mass="38714">MGSSFGDLFRISTFGESHGGGVGVIVEGCPPRLELDLQKIQAELDRRKPGQSKISTPRKEEDQVEILSGLLNNTTLGTPIAMVVRNKDHKPGDYKEMNVAFRPSHADATYQAKYGIQARSGGGRASARETIARVAAGAIAKQLLTKAHNTEVLAWVKRIHTLEAEINAQDVSIDDVEANIVRCPNQVMAAQMVERIEAISREGDSCGGVIECVVRNAPMGLGMPVFDKLEADLAKAVMSLPASKGFEIGSGFGGTLLKGSEHNDAFLPSNDGRLRTATNNSGGIQGGITNGESIVIRVAFKPTATIRKDQQTIDADGNTTTLSAKGRHDPCVLPRAVPIVEAMVSLVLADHLLRQQGQCSLW</sequence>
<evidence type="ECO:0000255" key="1">
    <source>
        <dbReference type="HAMAP-Rule" id="MF_00300"/>
    </source>
</evidence>
<name>AROC_PROM3</name>
<comment type="function">
    <text evidence="1">Catalyzes the anti-1,4-elimination of the C-3 phosphate and the C-6 proR hydrogen from 5-enolpyruvylshikimate-3-phosphate (EPSP) to yield chorismate, which is the branch point compound that serves as the starting substrate for the three terminal pathways of aromatic amino acid biosynthesis. This reaction introduces a second double bond into the aromatic ring system.</text>
</comment>
<comment type="catalytic activity">
    <reaction evidence="1">
        <text>5-O-(1-carboxyvinyl)-3-phosphoshikimate = chorismate + phosphate</text>
        <dbReference type="Rhea" id="RHEA:21020"/>
        <dbReference type="ChEBI" id="CHEBI:29748"/>
        <dbReference type="ChEBI" id="CHEBI:43474"/>
        <dbReference type="ChEBI" id="CHEBI:57701"/>
        <dbReference type="EC" id="4.2.3.5"/>
    </reaction>
</comment>
<comment type="cofactor">
    <cofactor evidence="1">
        <name>FMNH2</name>
        <dbReference type="ChEBI" id="CHEBI:57618"/>
    </cofactor>
    <text evidence="1">Reduced FMN (FMNH(2)).</text>
</comment>
<comment type="pathway">
    <text evidence="1">Metabolic intermediate biosynthesis; chorismate biosynthesis; chorismate from D-erythrose 4-phosphate and phosphoenolpyruvate: step 7/7.</text>
</comment>
<comment type="subunit">
    <text evidence="1">Homotetramer.</text>
</comment>
<comment type="similarity">
    <text evidence="1">Belongs to the chorismate synthase family.</text>
</comment>
<protein>
    <recommendedName>
        <fullName evidence="1">Chorismate synthase</fullName>
        <shortName evidence="1">CS</shortName>
        <ecNumber evidence="1">4.2.3.5</ecNumber>
    </recommendedName>
    <alternativeName>
        <fullName evidence="1">5-enolpyruvylshikimate-3-phosphate phospholyase</fullName>
    </alternativeName>
</protein>
<keyword id="KW-0028">Amino-acid biosynthesis</keyword>
<keyword id="KW-0057">Aromatic amino acid biosynthesis</keyword>
<keyword id="KW-0274">FAD</keyword>
<keyword id="KW-0285">Flavoprotein</keyword>
<keyword id="KW-0288">FMN</keyword>
<keyword id="KW-0456">Lyase</keyword>
<keyword id="KW-0521">NADP</keyword>
<proteinExistence type="inferred from homology"/>
<dbReference type="EC" id="4.2.3.5" evidence="1"/>
<dbReference type="EMBL" id="CP000554">
    <property type="protein sequence ID" value="ABM79112.1"/>
    <property type="molecule type" value="Genomic_DNA"/>
</dbReference>
<dbReference type="RefSeq" id="WP_011131162.1">
    <property type="nucleotide sequence ID" value="NC_008820.1"/>
</dbReference>
<dbReference type="SMR" id="A2CCA2"/>
<dbReference type="STRING" id="59922.P9303_23791"/>
<dbReference type="KEGG" id="pmf:P9303_23791"/>
<dbReference type="HOGENOM" id="CLU_034547_0_1_3"/>
<dbReference type="BioCyc" id="PMAR59922:G1G80-2091-MONOMER"/>
<dbReference type="UniPathway" id="UPA00053">
    <property type="reaction ID" value="UER00090"/>
</dbReference>
<dbReference type="Proteomes" id="UP000002274">
    <property type="component" value="Chromosome"/>
</dbReference>
<dbReference type="GO" id="GO:0005829">
    <property type="term" value="C:cytosol"/>
    <property type="evidence" value="ECO:0007669"/>
    <property type="project" value="TreeGrafter"/>
</dbReference>
<dbReference type="GO" id="GO:0004107">
    <property type="term" value="F:chorismate synthase activity"/>
    <property type="evidence" value="ECO:0007669"/>
    <property type="project" value="UniProtKB-UniRule"/>
</dbReference>
<dbReference type="GO" id="GO:0010181">
    <property type="term" value="F:FMN binding"/>
    <property type="evidence" value="ECO:0007669"/>
    <property type="project" value="TreeGrafter"/>
</dbReference>
<dbReference type="GO" id="GO:0008652">
    <property type="term" value="P:amino acid biosynthetic process"/>
    <property type="evidence" value="ECO:0007669"/>
    <property type="project" value="UniProtKB-KW"/>
</dbReference>
<dbReference type="GO" id="GO:0009073">
    <property type="term" value="P:aromatic amino acid family biosynthetic process"/>
    <property type="evidence" value="ECO:0007669"/>
    <property type="project" value="UniProtKB-KW"/>
</dbReference>
<dbReference type="GO" id="GO:0009423">
    <property type="term" value="P:chorismate biosynthetic process"/>
    <property type="evidence" value="ECO:0007669"/>
    <property type="project" value="UniProtKB-UniRule"/>
</dbReference>
<dbReference type="CDD" id="cd07304">
    <property type="entry name" value="Chorismate_synthase"/>
    <property type="match status" value="1"/>
</dbReference>
<dbReference type="FunFam" id="3.60.150.10:FF:000003">
    <property type="entry name" value="Chorismate synthase"/>
    <property type="match status" value="1"/>
</dbReference>
<dbReference type="Gene3D" id="3.60.150.10">
    <property type="entry name" value="Chorismate synthase AroC"/>
    <property type="match status" value="1"/>
</dbReference>
<dbReference type="HAMAP" id="MF_00300">
    <property type="entry name" value="Chorismate_synth"/>
    <property type="match status" value="1"/>
</dbReference>
<dbReference type="InterPro" id="IPR000453">
    <property type="entry name" value="Chorismate_synth"/>
</dbReference>
<dbReference type="InterPro" id="IPR035904">
    <property type="entry name" value="Chorismate_synth_AroC_sf"/>
</dbReference>
<dbReference type="InterPro" id="IPR020541">
    <property type="entry name" value="Chorismate_synthase_CS"/>
</dbReference>
<dbReference type="NCBIfam" id="TIGR00033">
    <property type="entry name" value="aroC"/>
    <property type="match status" value="1"/>
</dbReference>
<dbReference type="NCBIfam" id="NF003793">
    <property type="entry name" value="PRK05382.1"/>
    <property type="match status" value="1"/>
</dbReference>
<dbReference type="PANTHER" id="PTHR21085">
    <property type="entry name" value="CHORISMATE SYNTHASE"/>
    <property type="match status" value="1"/>
</dbReference>
<dbReference type="PANTHER" id="PTHR21085:SF0">
    <property type="entry name" value="CHORISMATE SYNTHASE"/>
    <property type="match status" value="1"/>
</dbReference>
<dbReference type="Pfam" id="PF01264">
    <property type="entry name" value="Chorismate_synt"/>
    <property type="match status" value="1"/>
</dbReference>
<dbReference type="PIRSF" id="PIRSF001456">
    <property type="entry name" value="Chorismate_synth"/>
    <property type="match status" value="1"/>
</dbReference>
<dbReference type="SUPFAM" id="SSF103263">
    <property type="entry name" value="Chorismate synthase, AroC"/>
    <property type="match status" value="1"/>
</dbReference>
<dbReference type="PROSITE" id="PS00787">
    <property type="entry name" value="CHORISMATE_SYNTHASE_1"/>
    <property type="match status" value="1"/>
</dbReference>
<dbReference type="PROSITE" id="PS00788">
    <property type="entry name" value="CHORISMATE_SYNTHASE_2"/>
    <property type="match status" value="1"/>
</dbReference>
<dbReference type="PROSITE" id="PS00789">
    <property type="entry name" value="CHORISMATE_SYNTHASE_3"/>
    <property type="match status" value="1"/>
</dbReference>
<accession>A2CCA2</accession>
<reference key="1">
    <citation type="journal article" date="2007" name="PLoS Genet.">
        <title>Patterns and implications of gene gain and loss in the evolution of Prochlorococcus.</title>
        <authorList>
            <person name="Kettler G.C."/>
            <person name="Martiny A.C."/>
            <person name="Huang K."/>
            <person name="Zucker J."/>
            <person name="Coleman M.L."/>
            <person name="Rodrigue S."/>
            <person name="Chen F."/>
            <person name="Lapidus A."/>
            <person name="Ferriera S."/>
            <person name="Johnson J."/>
            <person name="Steglich C."/>
            <person name="Church G.M."/>
            <person name="Richardson P."/>
            <person name="Chisholm S.W."/>
        </authorList>
    </citation>
    <scope>NUCLEOTIDE SEQUENCE [LARGE SCALE GENOMIC DNA]</scope>
    <source>
        <strain>MIT 9303</strain>
    </source>
</reference>
<organism>
    <name type="scientific">Prochlorococcus marinus (strain MIT 9303)</name>
    <dbReference type="NCBI Taxonomy" id="59922"/>
    <lineage>
        <taxon>Bacteria</taxon>
        <taxon>Bacillati</taxon>
        <taxon>Cyanobacteriota</taxon>
        <taxon>Cyanophyceae</taxon>
        <taxon>Synechococcales</taxon>
        <taxon>Prochlorococcaceae</taxon>
        <taxon>Prochlorococcus</taxon>
    </lineage>
</organism>
<gene>
    <name evidence="1" type="primary">aroC</name>
    <name type="ordered locus">P9303_23791</name>
</gene>